<evidence type="ECO:0000250" key="1"/>
<evidence type="ECO:0000255" key="2">
    <source>
        <dbReference type="PROSITE-ProRule" id="PRU00541"/>
    </source>
</evidence>
<evidence type="ECO:0000255" key="3">
    <source>
        <dbReference type="PROSITE-ProRule" id="PRU00542"/>
    </source>
</evidence>
<evidence type="ECO:0000256" key="4">
    <source>
        <dbReference type="SAM" id="MobiDB-lite"/>
    </source>
</evidence>
<evidence type="ECO:0000305" key="5"/>
<sequence length="824" mass="91785">MAGTKKRANADDDFVLTLSDDENDTLNQLEEEGEGDDGALATGSKTKKRKRDDAAAAQQEKGKNKKVKKQEQQQQQAQQKKKKGKNAPVQEEEDEDEEEEEDQGEDDGALNSDFEFDVGGAANEVRDFDGWEVNGNEEGKGGDKKAVDIDDIISRRQAKKEAELIRKQKKKKQKQEEEFSELEDDDEEDGGMEVDFGDDELLAEDGFGMGVDGEEESEKSDAEDEEKEEGSDEEAEGSDEDEQMDEDDDDAASDDDSVATPVMHPDDIASDRDSDEESQVDAEEEEKRKAFFAPEEEKTSESAMADAKRSFQEFNLSRPILRGLAGVNFSNPTPIQRKTIPVALLGKDIVGSAVTGSGKTAAFVVPILERLLFRPRKVPTSRVAILMPTRELAVQCYNVATKLATYTDITFCQLVGGFSLREQENILKKRPDVIIATPGRFIDHMRNSASFTVDTLEILVLDEADRMLEDGFADELNEILTTIPKSRQTMLFSATMTDTVDKLIRVGLNRPVRLMVDAKKNTAVTLVQEFVRLRPGREDKRLGYLLYLCKEIYTGRVIVFFRQKKEAHRVRIIFGLLGLKAAELHGSMSQEQSVENFREGKAAFLLATDLASRGLDIKGVETVINYEAPQSHEIYLHRVGRTARAGRSGRACTIAAEPDRKVVKAAVKAGKSQGAKIASRVIEPAVADSWAAKAEELADEVEEVLSEEKLEKQLAQAEMQVTKGENLIKHEAEIKSRPKRTWFETERDKKAARKLGAAELNGPDAGMSKKEKQKLSNKDKKRLDDSRQRQEAGAGWKKGRATRESMKNGQLPKAKKDNKKKGKK</sequence>
<protein>
    <recommendedName>
        <fullName>ATP-dependent RNA helicase drs1</fullName>
        <ecNumber>3.6.4.13</ecNumber>
    </recommendedName>
</protein>
<dbReference type="EC" id="3.6.4.13"/>
<dbReference type="EMBL" id="AM269986">
    <property type="protein sequence ID" value="CAK37361.1"/>
    <property type="molecule type" value="Genomic_DNA"/>
</dbReference>
<dbReference type="SMR" id="A2QAX7"/>
<dbReference type="EnsemblFungi" id="CAK37361">
    <property type="protein sequence ID" value="CAK37361"/>
    <property type="gene ID" value="An01g13150"/>
</dbReference>
<dbReference type="HOGENOM" id="CLU_003041_3_2_1"/>
<dbReference type="Proteomes" id="UP000006706">
    <property type="component" value="Chromosome 2R"/>
</dbReference>
<dbReference type="GO" id="GO:0005829">
    <property type="term" value="C:cytosol"/>
    <property type="evidence" value="ECO:0007669"/>
    <property type="project" value="TreeGrafter"/>
</dbReference>
<dbReference type="GO" id="GO:0005730">
    <property type="term" value="C:nucleolus"/>
    <property type="evidence" value="ECO:0007669"/>
    <property type="project" value="UniProtKB-SubCell"/>
</dbReference>
<dbReference type="GO" id="GO:0030687">
    <property type="term" value="C:preribosome, large subunit precursor"/>
    <property type="evidence" value="ECO:0007669"/>
    <property type="project" value="EnsemblFungi"/>
</dbReference>
<dbReference type="GO" id="GO:0005524">
    <property type="term" value="F:ATP binding"/>
    <property type="evidence" value="ECO:0007669"/>
    <property type="project" value="UniProtKB-KW"/>
</dbReference>
<dbReference type="GO" id="GO:0016887">
    <property type="term" value="F:ATP hydrolysis activity"/>
    <property type="evidence" value="ECO:0007669"/>
    <property type="project" value="RHEA"/>
</dbReference>
<dbReference type="GO" id="GO:0003723">
    <property type="term" value="F:RNA binding"/>
    <property type="evidence" value="ECO:0007669"/>
    <property type="project" value="UniProtKB-KW"/>
</dbReference>
<dbReference type="GO" id="GO:0003724">
    <property type="term" value="F:RNA helicase activity"/>
    <property type="evidence" value="ECO:0007669"/>
    <property type="project" value="UniProtKB-EC"/>
</dbReference>
<dbReference type="GO" id="GO:0000027">
    <property type="term" value="P:ribosomal large subunit assembly"/>
    <property type="evidence" value="ECO:0007669"/>
    <property type="project" value="EnsemblFungi"/>
</dbReference>
<dbReference type="GO" id="GO:0006364">
    <property type="term" value="P:rRNA processing"/>
    <property type="evidence" value="ECO:0007669"/>
    <property type="project" value="EnsemblFungi"/>
</dbReference>
<dbReference type="CDD" id="cd17947">
    <property type="entry name" value="DEADc_DDX27"/>
    <property type="match status" value="1"/>
</dbReference>
<dbReference type="CDD" id="cd18787">
    <property type="entry name" value="SF2_C_DEAD"/>
    <property type="match status" value="1"/>
</dbReference>
<dbReference type="Gene3D" id="3.40.50.300">
    <property type="entry name" value="P-loop containing nucleotide triphosphate hydrolases"/>
    <property type="match status" value="2"/>
</dbReference>
<dbReference type="InterPro" id="IPR011545">
    <property type="entry name" value="DEAD/DEAH_box_helicase_dom"/>
</dbReference>
<dbReference type="InterPro" id="IPR050079">
    <property type="entry name" value="DEAD_box_RNA_helicase"/>
</dbReference>
<dbReference type="InterPro" id="IPR014001">
    <property type="entry name" value="Helicase_ATP-bd"/>
</dbReference>
<dbReference type="InterPro" id="IPR001650">
    <property type="entry name" value="Helicase_C-like"/>
</dbReference>
<dbReference type="InterPro" id="IPR027417">
    <property type="entry name" value="P-loop_NTPase"/>
</dbReference>
<dbReference type="InterPro" id="IPR000629">
    <property type="entry name" value="RNA-helicase_DEAD-box_CS"/>
</dbReference>
<dbReference type="InterPro" id="IPR014014">
    <property type="entry name" value="RNA_helicase_DEAD_Q_motif"/>
</dbReference>
<dbReference type="PANTHER" id="PTHR47959:SF1">
    <property type="entry name" value="ATP-DEPENDENT RNA HELICASE DBPA"/>
    <property type="match status" value="1"/>
</dbReference>
<dbReference type="PANTHER" id="PTHR47959">
    <property type="entry name" value="ATP-DEPENDENT RNA HELICASE RHLE-RELATED"/>
    <property type="match status" value="1"/>
</dbReference>
<dbReference type="Pfam" id="PF00270">
    <property type="entry name" value="DEAD"/>
    <property type="match status" value="1"/>
</dbReference>
<dbReference type="Pfam" id="PF00271">
    <property type="entry name" value="Helicase_C"/>
    <property type="match status" value="1"/>
</dbReference>
<dbReference type="SMART" id="SM00487">
    <property type="entry name" value="DEXDc"/>
    <property type="match status" value="1"/>
</dbReference>
<dbReference type="SMART" id="SM00490">
    <property type="entry name" value="HELICc"/>
    <property type="match status" value="1"/>
</dbReference>
<dbReference type="SUPFAM" id="SSF52540">
    <property type="entry name" value="P-loop containing nucleoside triphosphate hydrolases"/>
    <property type="match status" value="2"/>
</dbReference>
<dbReference type="PROSITE" id="PS00039">
    <property type="entry name" value="DEAD_ATP_HELICASE"/>
    <property type="match status" value="1"/>
</dbReference>
<dbReference type="PROSITE" id="PS51192">
    <property type="entry name" value="HELICASE_ATP_BIND_1"/>
    <property type="match status" value="1"/>
</dbReference>
<dbReference type="PROSITE" id="PS51194">
    <property type="entry name" value="HELICASE_CTER"/>
    <property type="match status" value="1"/>
</dbReference>
<dbReference type="PROSITE" id="PS51195">
    <property type="entry name" value="Q_MOTIF"/>
    <property type="match status" value="1"/>
</dbReference>
<organism>
    <name type="scientific">Aspergillus niger (strain ATCC MYA-4892 / CBS 513.88 / FGSC A1513)</name>
    <dbReference type="NCBI Taxonomy" id="425011"/>
    <lineage>
        <taxon>Eukaryota</taxon>
        <taxon>Fungi</taxon>
        <taxon>Dikarya</taxon>
        <taxon>Ascomycota</taxon>
        <taxon>Pezizomycotina</taxon>
        <taxon>Eurotiomycetes</taxon>
        <taxon>Eurotiomycetidae</taxon>
        <taxon>Eurotiales</taxon>
        <taxon>Aspergillaceae</taxon>
        <taxon>Aspergillus</taxon>
        <taxon>Aspergillus subgen. Circumdati</taxon>
    </lineage>
</organism>
<gene>
    <name type="primary">drs1</name>
    <name type="ORF">An01g13150</name>
</gene>
<comment type="function">
    <text evidence="1">ATP-binding RNA helicase involved in ribosome assembly.</text>
</comment>
<comment type="catalytic activity">
    <reaction>
        <text>ATP + H2O = ADP + phosphate + H(+)</text>
        <dbReference type="Rhea" id="RHEA:13065"/>
        <dbReference type="ChEBI" id="CHEBI:15377"/>
        <dbReference type="ChEBI" id="CHEBI:15378"/>
        <dbReference type="ChEBI" id="CHEBI:30616"/>
        <dbReference type="ChEBI" id="CHEBI:43474"/>
        <dbReference type="ChEBI" id="CHEBI:456216"/>
        <dbReference type="EC" id="3.6.4.13"/>
    </reaction>
</comment>
<comment type="subunit">
    <text evidence="1">Associates with pre-ribosomal particles.</text>
</comment>
<comment type="subcellular location">
    <subcellularLocation>
        <location evidence="1">Nucleus</location>
        <location evidence="1">Nucleolus</location>
    </subcellularLocation>
</comment>
<comment type="domain">
    <text>The Q motif is unique to and characteristic of the DEAD box family of RNA helicases and controls ATP binding and hydrolysis.</text>
</comment>
<comment type="similarity">
    <text evidence="5">Belongs to the DEAD box helicase family. DDX27/DRS1 subfamily.</text>
</comment>
<feature type="chain" id="PRO_0000282490" description="ATP-dependent RNA helicase drs1">
    <location>
        <begin position="1"/>
        <end position="824"/>
    </location>
</feature>
<feature type="domain" description="Helicase ATP-binding" evidence="2">
    <location>
        <begin position="340"/>
        <end position="514"/>
    </location>
</feature>
<feature type="domain" description="Helicase C-terminal" evidence="3">
    <location>
        <begin position="541"/>
        <end position="685"/>
    </location>
</feature>
<feature type="region of interest" description="Disordered" evidence="4">
    <location>
        <begin position="1"/>
        <end position="305"/>
    </location>
</feature>
<feature type="region of interest" description="Disordered" evidence="4">
    <location>
        <begin position="739"/>
        <end position="824"/>
    </location>
</feature>
<feature type="short sequence motif" description="Q motif">
    <location>
        <begin position="309"/>
        <end position="337"/>
    </location>
</feature>
<feature type="short sequence motif" description="DEAD box">
    <location>
        <begin position="462"/>
        <end position="465"/>
    </location>
</feature>
<feature type="compositionally biased region" description="Acidic residues" evidence="4">
    <location>
        <begin position="11"/>
        <end position="37"/>
    </location>
</feature>
<feature type="compositionally biased region" description="Acidic residues" evidence="4">
    <location>
        <begin position="90"/>
        <end position="108"/>
    </location>
</feature>
<feature type="compositionally biased region" description="Basic and acidic residues" evidence="4">
    <location>
        <begin position="137"/>
        <end position="166"/>
    </location>
</feature>
<feature type="compositionally biased region" description="Acidic residues" evidence="4">
    <location>
        <begin position="178"/>
        <end position="203"/>
    </location>
</feature>
<feature type="compositionally biased region" description="Acidic residues" evidence="4">
    <location>
        <begin position="212"/>
        <end position="257"/>
    </location>
</feature>
<feature type="compositionally biased region" description="Acidic residues" evidence="4">
    <location>
        <begin position="273"/>
        <end position="284"/>
    </location>
</feature>
<feature type="compositionally biased region" description="Basic and acidic residues" evidence="4">
    <location>
        <begin position="285"/>
        <end position="305"/>
    </location>
</feature>
<feature type="compositionally biased region" description="Basic and acidic residues" evidence="4">
    <location>
        <begin position="739"/>
        <end position="749"/>
    </location>
</feature>
<feature type="compositionally biased region" description="Basic and acidic residues" evidence="4">
    <location>
        <begin position="767"/>
        <end position="790"/>
    </location>
</feature>
<feature type="binding site" evidence="2">
    <location>
        <begin position="353"/>
        <end position="360"/>
    </location>
    <ligand>
        <name>ATP</name>
        <dbReference type="ChEBI" id="CHEBI:30616"/>
    </ligand>
</feature>
<reference key="1">
    <citation type="journal article" date="2007" name="Nat. Biotechnol.">
        <title>Genome sequencing and analysis of the versatile cell factory Aspergillus niger CBS 513.88.</title>
        <authorList>
            <person name="Pel H.J."/>
            <person name="de Winde J.H."/>
            <person name="Archer D.B."/>
            <person name="Dyer P.S."/>
            <person name="Hofmann G."/>
            <person name="Schaap P.J."/>
            <person name="Turner G."/>
            <person name="de Vries R.P."/>
            <person name="Albang R."/>
            <person name="Albermann K."/>
            <person name="Andersen M.R."/>
            <person name="Bendtsen J.D."/>
            <person name="Benen J.A.E."/>
            <person name="van den Berg M."/>
            <person name="Breestraat S."/>
            <person name="Caddick M.X."/>
            <person name="Contreras R."/>
            <person name="Cornell M."/>
            <person name="Coutinho P.M."/>
            <person name="Danchin E.G.J."/>
            <person name="Debets A.J.M."/>
            <person name="Dekker P."/>
            <person name="van Dijck P.W.M."/>
            <person name="van Dijk A."/>
            <person name="Dijkhuizen L."/>
            <person name="Driessen A.J.M."/>
            <person name="d'Enfert C."/>
            <person name="Geysens S."/>
            <person name="Goosen C."/>
            <person name="Groot G.S.P."/>
            <person name="de Groot P.W.J."/>
            <person name="Guillemette T."/>
            <person name="Henrissat B."/>
            <person name="Herweijer M."/>
            <person name="van den Hombergh J.P.T.W."/>
            <person name="van den Hondel C.A.M.J.J."/>
            <person name="van der Heijden R.T.J.M."/>
            <person name="van der Kaaij R.M."/>
            <person name="Klis F.M."/>
            <person name="Kools H.J."/>
            <person name="Kubicek C.P."/>
            <person name="van Kuyk P.A."/>
            <person name="Lauber J."/>
            <person name="Lu X."/>
            <person name="van der Maarel M.J.E.C."/>
            <person name="Meulenberg R."/>
            <person name="Menke H."/>
            <person name="Mortimer M.A."/>
            <person name="Nielsen J."/>
            <person name="Oliver S.G."/>
            <person name="Olsthoorn M."/>
            <person name="Pal K."/>
            <person name="van Peij N.N.M.E."/>
            <person name="Ram A.F.J."/>
            <person name="Rinas U."/>
            <person name="Roubos J.A."/>
            <person name="Sagt C.M.J."/>
            <person name="Schmoll M."/>
            <person name="Sun J."/>
            <person name="Ussery D."/>
            <person name="Varga J."/>
            <person name="Vervecken W."/>
            <person name="van de Vondervoort P.J.J."/>
            <person name="Wedler H."/>
            <person name="Woesten H.A.B."/>
            <person name="Zeng A.-P."/>
            <person name="van Ooyen A.J.J."/>
            <person name="Visser J."/>
            <person name="Stam H."/>
        </authorList>
    </citation>
    <scope>NUCLEOTIDE SEQUENCE [LARGE SCALE GENOMIC DNA]</scope>
    <source>
        <strain>ATCC MYA-4892 / CBS 513.88 / FGSC A1513</strain>
    </source>
</reference>
<proteinExistence type="inferred from homology"/>
<name>DRS1_ASPNC</name>
<accession>A2QAX7</accession>
<keyword id="KW-0067">ATP-binding</keyword>
<keyword id="KW-0347">Helicase</keyword>
<keyword id="KW-0378">Hydrolase</keyword>
<keyword id="KW-0547">Nucleotide-binding</keyword>
<keyword id="KW-0539">Nucleus</keyword>
<keyword id="KW-1185">Reference proteome</keyword>
<keyword id="KW-0690">Ribosome biogenesis</keyword>
<keyword id="KW-0694">RNA-binding</keyword>